<proteinExistence type="evidence at protein level"/>
<name>ABCE1_HUMAN</name>
<dbReference type="EC" id="3.6.5.-" evidence="7"/>
<dbReference type="EMBL" id="X76388">
    <property type="protein sequence ID" value="CAA53972.1"/>
    <property type="molecule type" value="mRNA"/>
</dbReference>
<dbReference type="EMBL" id="X74987">
    <property type="protein sequence ID" value="CAA52920.1"/>
    <property type="molecule type" value="mRNA"/>
</dbReference>
<dbReference type="EMBL" id="AB062293">
    <property type="protein sequence ID" value="BAB93476.1"/>
    <property type="molecule type" value="mRNA"/>
</dbReference>
<dbReference type="EMBL" id="BT009779">
    <property type="protein sequence ID" value="AAP88781.1"/>
    <property type="molecule type" value="mRNA"/>
</dbReference>
<dbReference type="EMBL" id="DQ148409">
    <property type="protein sequence ID" value="AAZ38723.1"/>
    <property type="molecule type" value="Genomic_DNA"/>
</dbReference>
<dbReference type="EMBL" id="BC016283">
    <property type="protein sequence ID" value="AAH16283.1"/>
    <property type="molecule type" value="mRNA"/>
</dbReference>
<dbReference type="EMBL" id="BC016988">
    <property type="protein sequence ID" value="AAH16988.1"/>
    <property type="molecule type" value="mRNA"/>
</dbReference>
<dbReference type="CCDS" id="CCDS34071.1"/>
<dbReference type="PIR" id="A57017">
    <property type="entry name" value="A57017"/>
</dbReference>
<dbReference type="PIR" id="S63672">
    <property type="entry name" value="S63672"/>
</dbReference>
<dbReference type="RefSeq" id="NP_001035809.1">
    <property type="nucleotide sequence ID" value="NM_001040876.2"/>
</dbReference>
<dbReference type="RefSeq" id="NP_002931.2">
    <property type="nucleotide sequence ID" value="NM_002940.3"/>
</dbReference>
<dbReference type="PDB" id="6ZME">
    <property type="method" value="EM"/>
    <property type="resolution" value="3.00 A"/>
    <property type="chains" value="CI=1-599"/>
</dbReference>
<dbReference type="PDB" id="6ZVJ">
    <property type="method" value="EM"/>
    <property type="resolution" value="3.80 A"/>
    <property type="chains" value="1=4-598"/>
</dbReference>
<dbReference type="PDB" id="7A09">
    <property type="method" value="EM"/>
    <property type="resolution" value="3.50 A"/>
    <property type="chains" value="J=1-599"/>
</dbReference>
<dbReference type="PDBsum" id="6ZME"/>
<dbReference type="PDBsum" id="6ZVJ"/>
<dbReference type="PDBsum" id="7A09"/>
<dbReference type="EMDB" id="EMD-11289"/>
<dbReference type="EMDB" id="EMD-11458"/>
<dbReference type="EMDB" id="EMD-11602"/>
<dbReference type="EMDB" id="EMD-3038"/>
<dbReference type="EMDB" id="EMD-3039"/>
<dbReference type="EMDB" id="EMD-3040"/>
<dbReference type="SMR" id="P61221"/>
<dbReference type="BioGRID" id="111986">
    <property type="interactions" value="409"/>
</dbReference>
<dbReference type="FunCoup" id="P61221">
    <property type="interactions" value="3957"/>
</dbReference>
<dbReference type="IntAct" id="P61221">
    <property type="interactions" value="97"/>
</dbReference>
<dbReference type="MINT" id="P61221"/>
<dbReference type="STRING" id="9606.ENSP00000296577"/>
<dbReference type="TCDB" id="3.A.1.31.4">
    <property type="family name" value="the atp-binding cassette (abc) superfamily"/>
</dbReference>
<dbReference type="CarbonylDB" id="P61221"/>
<dbReference type="GlyGen" id="P61221">
    <property type="glycosylation" value="2 sites, 2 N-linked glycans (1 site), 1 O-linked glycan (1 site)"/>
</dbReference>
<dbReference type="iPTMnet" id="P61221"/>
<dbReference type="MetOSite" id="P61221"/>
<dbReference type="PhosphoSitePlus" id="P61221"/>
<dbReference type="SwissPalm" id="P61221"/>
<dbReference type="BioMuta" id="ABCE1"/>
<dbReference type="DMDM" id="47117664"/>
<dbReference type="jPOST" id="P61221"/>
<dbReference type="MassIVE" id="P61221"/>
<dbReference type="PaxDb" id="9606-ENSP00000296577"/>
<dbReference type="PeptideAtlas" id="P61221"/>
<dbReference type="ProteomicsDB" id="57276"/>
<dbReference type="Pumba" id="P61221"/>
<dbReference type="Antibodypedia" id="27438">
    <property type="antibodies" value="329 antibodies from 30 providers"/>
</dbReference>
<dbReference type="DNASU" id="6059"/>
<dbReference type="Ensembl" id="ENST00000296577.9">
    <property type="protein sequence ID" value="ENSP00000296577.4"/>
    <property type="gene ID" value="ENSG00000164163.11"/>
</dbReference>
<dbReference type="GeneID" id="6059"/>
<dbReference type="KEGG" id="hsa:6059"/>
<dbReference type="MANE-Select" id="ENST00000296577.9">
    <property type="protein sequence ID" value="ENSP00000296577.4"/>
    <property type="RefSeq nucleotide sequence ID" value="NM_002940.3"/>
    <property type="RefSeq protein sequence ID" value="NP_002931.2"/>
</dbReference>
<dbReference type="UCSC" id="uc003ijy.4">
    <property type="organism name" value="human"/>
</dbReference>
<dbReference type="AGR" id="HGNC:69"/>
<dbReference type="CTD" id="6059"/>
<dbReference type="DisGeNET" id="6059"/>
<dbReference type="GeneCards" id="ABCE1"/>
<dbReference type="HGNC" id="HGNC:69">
    <property type="gene designation" value="ABCE1"/>
</dbReference>
<dbReference type="HPA" id="ENSG00000164163">
    <property type="expression patterns" value="Low tissue specificity"/>
</dbReference>
<dbReference type="MalaCards" id="ABCE1"/>
<dbReference type="MIM" id="601213">
    <property type="type" value="gene"/>
</dbReference>
<dbReference type="neXtProt" id="NX_P61221"/>
<dbReference type="OpenTargets" id="ENSG00000164163"/>
<dbReference type="PharmGKB" id="PA24404"/>
<dbReference type="VEuPathDB" id="HostDB:ENSG00000164163"/>
<dbReference type="eggNOG" id="KOG0063">
    <property type="taxonomic scope" value="Eukaryota"/>
</dbReference>
<dbReference type="GeneTree" id="ENSGT00390000015089"/>
<dbReference type="HOGENOM" id="CLU_017344_4_1_1"/>
<dbReference type="InParanoid" id="P61221"/>
<dbReference type="OMA" id="MVCIQNG"/>
<dbReference type="OrthoDB" id="6593433at2759"/>
<dbReference type="PAN-GO" id="P61221">
    <property type="GO annotations" value="6 GO annotations based on evolutionary models"/>
</dbReference>
<dbReference type="PhylomeDB" id="P61221"/>
<dbReference type="TreeFam" id="TF105206"/>
<dbReference type="PathwayCommons" id="P61221"/>
<dbReference type="Reactome" id="R-HSA-8983711">
    <property type="pathway name" value="OAS antiviral response"/>
</dbReference>
<dbReference type="Reactome" id="R-HSA-909733">
    <property type="pathway name" value="Interferon alpha/beta signaling"/>
</dbReference>
<dbReference type="SignaLink" id="P61221"/>
<dbReference type="SIGNOR" id="P61221"/>
<dbReference type="BioGRID-ORCS" id="6059">
    <property type="hits" value="807 hits in 1138 CRISPR screens"/>
</dbReference>
<dbReference type="CD-CODE" id="DEE660B4">
    <property type="entry name" value="Stress granule"/>
</dbReference>
<dbReference type="ChiTaRS" id="ABCE1">
    <property type="organism name" value="human"/>
</dbReference>
<dbReference type="GenomeRNAi" id="6059"/>
<dbReference type="Pharos" id="P61221">
    <property type="development level" value="Tbio"/>
</dbReference>
<dbReference type="PRO" id="PR:P61221"/>
<dbReference type="Proteomes" id="UP000005640">
    <property type="component" value="Chromosome 4"/>
</dbReference>
<dbReference type="RNAct" id="P61221">
    <property type="molecule type" value="protein"/>
</dbReference>
<dbReference type="Bgee" id="ENSG00000164163">
    <property type="expression patterns" value="Expressed in primordial germ cell in gonad and 200 other cell types or tissues"/>
</dbReference>
<dbReference type="ExpressionAtlas" id="P61221">
    <property type="expression patterns" value="baseline and differential"/>
</dbReference>
<dbReference type="GO" id="GO:0005737">
    <property type="term" value="C:cytoplasm"/>
    <property type="evidence" value="ECO:0000314"/>
    <property type="project" value="UniProtKB"/>
</dbReference>
<dbReference type="GO" id="GO:0005829">
    <property type="term" value="C:cytosol"/>
    <property type="evidence" value="ECO:0000314"/>
    <property type="project" value="HPA"/>
</dbReference>
<dbReference type="GO" id="GO:0022626">
    <property type="term" value="C:cytosolic ribosome"/>
    <property type="evidence" value="ECO:0000314"/>
    <property type="project" value="UniProt"/>
</dbReference>
<dbReference type="GO" id="GO:0016020">
    <property type="term" value="C:membrane"/>
    <property type="evidence" value="ECO:0007005"/>
    <property type="project" value="UniProtKB"/>
</dbReference>
<dbReference type="GO" id="GO:0005759">
    <property type="term" value="C:mitochondrial matrix"/>
    <property type="evidence" value="ECO:0000304"/>
    <property type="project" value="Reactome"/>
</dbReference>
<dbReference type="GO" id="GO:0005739">
    <property type="term" value="C:mitochondrion"/>
    <property type="evidence" value="ECO:0000314"/>
    <property type="project" value="UniProtKB"/>
</dbReference>
<dbReference type="GO" id="GO:0051539">
    <property type="term" value="F:4 iron, 4 sulfur cluster binding"/>
    <property type="evidence" value="ECO:0007669"/>
    <property type="project" value="UniProtKB-KW"/>
</dbReference>
<dbReference type="GO" id="GO:0005524">
    <property type="term" value="F:ATP binding"/>
    <property type="evidence" value="ECO:0000318"/>
    <property type="project" value="GO_Central"/>
</dbReference>
<dbReference type="GO" id="GO:0016887">
    <property type="term" value="F:ATP hydrolysis activity"/>
    <property type="evidence" value="ECO:0000314"/>
    <property type="project" value="UniProtKB"/>
</dbReference>
<dbReference type="GO" id="GO:0043273">
    <property type="term" value="F:CTPase activity"/>
    <property type="evidence" value="ECO:0000314"/>
    <property type="project" value="UniProtKB"/>
</dbReference>
<dbReference type="GO" id="GO:0060698">
    <property type="term" value="F:endoribonuclease inhibitor activity"/>
    <property type="evidence" value="ECO:0000314"/>
    <property type="project" value="GO_Central"/>
</dbReference>
<dbReference type="GO" id="GO:0003924">
    <property type="term" value="F:GTPase activity"/>
    <property type="evidence" value="ECO:0000314"/>
    <property type="project" value="UniProtKB"/>
</dbReference>
<dbReference type="GO" id="GO:0005506">
    <property type="term" value="F:iron ion binding"/>
    <property type="evidence" value="ECO:0000318"/>
    <property type="project" value="GO_Central"/>
</dbReference>
<dbReference type="GO" id="GO:0017111">
    <property type="term" value="F:ribonucleoside triphosphate phosphatase activity"/>
    <property type="evidence" value="ECO:0000314"/>
    <property type="project" value="UniProt"/>
</dbReference>
<dbReference type="GO" id="GO:0043024">
    <property type="term" value="F:ribosomal small subunit binding"/>
    <property type="evidence" value="ECO:0000318"/>
    <property type="project" value="GO_Central"/>
</dbReference>
<dbReference type="GO" id="GO:0060702">
    <property type="term" value="P:negative regulation of endoribonuclease activity"/>
    <property type="evidence" value="ECO:0000314"/>
    <property type="project" value="GO_Central"/>
</dbReference>
<dbReference type="GO" id="GO:0006417">
    <property type="term" value="P:regulation of translation"/>
    <property type="evidence" value="ECO:0007669"/>
    <property type="project" value="UniProtKB-KW"/>
</dbReference>
<dbReference type="GO" id="GO:0072344">
    <property type="term" value="P:rescue of stalled ribosome"/>
    <property type="evidence" value="ECO:0000314"/>
    <property type="project" value="UniProtKB"/>
</dbReference>
<dbReference type="GO" id="GO:0032790">
    <property type="term" value="P:ribosome disassembly"/>
    <property type="evidence" value="ECO:0000314"/>
    <property type="project" value="UniProtKB"/>
</dbReference>
<dbReference type="GO" id="GO:0006413">
    <property type="term" value="P:translational initiation"/>
    <property type="evidence" value="ECO:0000318"/>
    <property type="project" value="GO_Central"/>
</dbReference>
<dbReference type="GO" id="GO:0006415">
    <property type="term" value="P:translational termination"/>
    <property type="evidence" value="ECO:0000314"/>
    <property type="project" value="UniProt"/>
</dbReference>
<dbReference type="CDD" id="cd03236">
    <property type="entry name" value="ABC_RNaseL_inhibitor_domain1"/>
    <property type="match status" value="1"/>
</dbReference>
<dbReference type="CDD" id="cd03237">
    <property type="entry name" value="ABC_RNaseL_inhibitor_domain2"/>
    <property type="match status" value="1"/>
</dbReference>
<dbReference type="FunFam" id="3.40.50.300:FF:000144">
    <property type="entry name" value="ATP-binding cassette sub-family E member 1"/>
    <property type="match status" value="1"/>
</dbReference>
<dbReference type="FunFam" id="3.40.50.300:FF:000152">
    <property type="entry name" value="ATP-binding cassette, sub-family E, member 1"/>
    <property type="match status" value="1"/>
</dbReference>
<dbReference type="Gene3D" id="3.40.50.300">
    <property type="entry name" value="P-loop containing nucleotide triphosphate hydrolases"/>
    <property type="match status" value="2"/>
</dbReference>
<dbReference type="InterPro" id="IPR017896">
    <property type="entry name" value="4Fe4S_Fe-S-bd"/>
</dbReference>
<dbReference type="InterPro" id="IPR017900">
    <property type="entry name" value="4Fe4S_Fe_S_CS"/>
</dbReference>
<dbReference type="InterPro" id="IPR003593">
    <property type="entry name" value="AAA+_ATPase"/>
</dbReference>
<dbReference type="InterPro" id="IPR003439">
    <property type="entry name" value="ABC_transporter-like_ATP-bd"/>
</dbReference>
<dbReference type="InterPro" id="IPR017871">
    <property type="entry name" value="ABC_transporter-like_CS"/>
</dbReference>
<dbReference type="InterPro" id="IPR027417">
    <property type="entry name" value="P-loop_NTPase"/>
</dbReference>
<dbReference type="InterPro" id="IPR013283">
    <property type="entry name" value="RLI1"/>
</dbReference>
<dbReference type="InterPro" id="IPR034348">
    <property type="entry name" value="RLI_dom_1"/>
</dbReference>
<dbReference type="InterPro" id="IPR007209">
    <property type="entry name" value="RNaseL-inhib-like_metal-bd_dom"/>
</dbReference>
<dbReference type="NCBIfam" id="NF009945">
    <property type="entry name" value="PRK13409.1"/>
    <property type="match status" value="1"/>
</dbReference>
<dbReference type="PANTHER" id="PTHR19248">
    <property type="entry name" value="ATP-BINDING TRANSPORT PROTEIN-RELATED"/>
    <property type="match status" value="1"/>
</dbReference>
<dbReference type="Pfam" id="PF00005">
    <property type="entry name" value="ABC_tran"/>
    <property type="match status" value="2"/>
</dbReference>
<dbReference type="Pfam" id="PF00037">
    <property type="entry name" value="Fer4"/>
    <property type="match status" value="1"/>
</dbReference>
<dbReference type="Pfam" id="PF04068">
    <property type="entry name" value="Fer4_RLI"/>
    <property type="match status" value="1"/>
</dbReference>
<dbReference type="PRINTS" id="PR01868">
    <property type="entry name" value="ABCEFAMILY"/>
</dbReference>
<dbReference type="SMART" id="SM00382">
    <property type="entry name" value="AAA"/>
    <property type="match status" value="2"/>
</dbReference>
<dbReference type="SUPFAM" id="SSF54862">
    <property type="entry name" value="4Fe-4S ferredoxins"/>
    <property type="match status" value="1"/>
</dbReference>
<dbReference type="SUPFAM" id="SSF52540">
    <property type="entry name" value="P-loop containing nucleoside triphosphate hydrolases"/>
    <property type="match status" value="2"/>
</dbReference>
<dbReference type="PROSITE" id="PS00198">
    <property type="entry name" value="4FE4S_FER_1"/>
    <property type="match status" value="1"/>
</dbReference>
<dbReference type="PROSITE" id="PS51379">
    <property type="entry name" value="4FE4S_FER_2"/>
    <property type="match status" value="2"/>
</dbReference>
<dbReference type="PROSITE" id="PS00211">
    <property type="entry name" value="ABC_TRANSPORTER_1"/>
    <property type="match status" value="1"/>
</dbReference>
<dbReference type="PROSITE" id="PS50893">
    <property type="entry name" value="ABC_TRANSPORTER_2"/>
    <property type="match status" value="2"/>
</dbReference>
<evidence type="ECO:0000255" key="1">
    <source>
        <dbReference type="PROSITE-ProRule" id="PRU00434"/>
    </source>
</evidence>
<evidence type="ECO:0000255" key="2">
    <source>
        <dbReference type="PROSITE-ProRule" id="PRU00711"/>
    </source>
</evidence>
<evidence type="ECO:0000269" key="3">
    <source>
    </source>
</evidence>
<evidence type="ECO:0000269" key="4">
    <source>
    </source>
</evidence>
<evidence type="ECO:0000269" key="5">
    <source>
    </source>
</evidence>
<evidence type="ECO:0000269" key="6">
    <source>
    </source>
</evidence>
<evidence type="ECO:0000269" key="7">
    <source>
    </source>
</evidence>
<evidence type="ECO:0000269" key="8">
    <source>
    </source>
</evidence>
<evidence type="ECO:0000269" key="9">
    <source>
    </source>
</evidence>
<evidence type="ECO:0000269" key="10">
    <source>
    </source>
</evidence>
<evidence type="ECO:0000269" key="11">
    <source>
    </source>
</evidence>
<evidence type="ECO:0000269" key="12">
    <source>
    </source>
</evidence>
<evidence type="ECO:0000305" key="13"/>
<evidence type="ECO:0000305" key="14">
    <source>
    </source>
</evidence>
<evidence type="ECO:0007744" key="15">
    <source>
    </source>
</evidence>
<reference key="1">
    <citation type="journal article" date="1995" name="J. Biol. Chem.">
        <title>Cloning and characterization of a RNase L inhibitor. A new component of the interferon-regulated 2-5A pathway.</title>
        <authorList>
            <person name="Bisbal C."/>
            <person name="Martinand C."/>
            <person name="Silhol M."/>
            <person name="Lebleu B."/>
            <person name="Salehzada T."/>
        </authorList>
    </citation>
    <scope>NUCLEOTIDE SEQUENCE [MRNA]</scope>
    <scope>CHARACTERIZATION</scope>
    <scope>INTERACTION WITH RNASEL</scope>
</reference>
<reference key="2">
    <citation type="journal article" date="1996" name="FEBS Lett.">
        <title>Chromosomal localization and expression pattern of the RNase L inhibitor gene.</title>
        <authorList>
            <person name="Aubry F."/>
            <person name="Mattei M.-G."/>
            <person name="Barque J.-P."/>
            <person name="Galibert F."/>
        </authorList>
    </citation>
    <scope>NUCLEOTIDE SEQUENCE [MRNA]</scope>
</reference>
<reference key="3">
    <citation type="submission" date="2001-05" db="EMBL/GenBank/DDBJ databases">
        <title>Identification of immuno-peptidmics that are recognized by tumor-reactive CTL generated from TIL of colon cancer patients.</title>
        <authorList>
            <person name="Shichijo S."/>
            <person name="Itoh K."/>
        </authorList>
    </citation>
    <scope>NUCLEOTIDE SEQUENCE [LARGE SCALE MRNA]</scope>
    <source>
        <tissue>Colon adenocarcinoma</tissue>
    </source>
</reference>
<reference key="4">
    <citation type="submission" date="2003-08" db="EMBL/GenBank/DDBJ databases">
        <title>Cloning of human full-length CDSs in BD Creator(TM) system donor vector.</title>
        <authorList>
            <person name="Kalnine N."/>
            <person name="Chen X."/>
            <person name="Rolfs A."/>
            <person name="Halleck A."/>
            <person name="Hines L."/>
            <person name="Eisenstein S."/>
            <person name="Koundinya M."/>
            <person name="Raphael J."/>
            <person name="Moreira D."/>
            <person name="Kelley T."/>
            <person name="LaBaer J."/>
            <person name="Lin Y."/>
            <person name="Phelan M."/>
            <person name="Farmer A."/>
        </authorList>
    </citation>
    <scope>NUCLEOTIDE SEQUENCE [LARGE SCALE MRNA]</scope>
</reference>
<reference key="5">
    <citation type="submission" date="2005-07" db="EMBL/GenBank/DDBJ databases">
        <authorList>
            <consortium name="SeattleSNPs variation discovery resource"/>
        </authorList>
    </citation>
    <scope>NUCLEOTIDE SEQUENCE [GENOMIC DNA]</scope>
</reference>
<reference key="6">
    <citation type="journal article" date="2004" name="Genome Res.">
        <title>The status, quality, and expansion of the NIH full-length cDNA project: the Mammalian Gene Collection (MGC).</title>
        <authorList>
            <consortium name="The MGC Project Team"/>
        </authorList>
    </citation>
    <scope>NUCLEOTIDE SEQUENCE [LARGE SCALE MRNA]</scope>
    <source>
        <tissue>Duodenum</tissue>
        <tissue>Uterus</tissue>
    </source>
</reference>
<reference key="7">
    <citation type="journal article" date="1998" name="Eur. J. Biochem.">
        <title>RNase L inhibitor (RLI) antisense constructions block partially the down regulation of the 2-5A/RNase L pathway in encephalomyocarditis-virus-(EMCV)-infected cells.</title>
        <authorList>
            <person name="Martinand C."/>
            <person name="Salehzada T."/>
            <person name="Silhol M."/>
            <person name="Lebleu B."/>
            <person name="Bisbal C."/>
        </authorList>
    </citation>
    <scope>FUNCTION</scope>
    <scope>FUNCTION (MICROBIAL INFECTION)</scope>
    <scope>INDUCTION BY EMCV</scope>
</reference>
<reference key="8">
    <citation type="journal article" date="1999" name="J. Virol.">
        <title>RNase L inhibitor is induced during human immunodeficiency virus type 1 infection and down regulates the 2-5A/RNase L pathway in human T cells.</title>
        <authorList>
            <person name="Martinand C."/>
            <person name="Montavon C."/>
            <person name="Salehzada T."/>
            <person name="Silhol M."/>
            <person name="Lebleu B."/>
            <person name="Bisbal C."/>
        </authorList>
    </citation>
    <scope>FUNCTION</scope>
    <scope>FUNCTION (MICROBIAL INFECTION)</scope>
    <scope>INDUCTION BY HIV-1</scope>
</reference>
<reference key="9">
    <citation type="journal article" date="2001" name="J. Biol. Chem.">
        <title>The 2-5A/RNase L/RNase L inhibitor (RNI) pathway regulates mitochondrial mRNAs stability in interferon alpha-treated H9 cells.</title>
        <authorList>
            <person name="Le Roy F."/>
            <person name="Bisbal C."/>
            <person name="Silhol M."/>
            <person name="Martinand C."/>
            <person name="Lebleu B."/>
            <person name="Salehzada T."/>
        </authorList>
    </citation>
    <scope>SUBCELLULAR LOCATION</scope>
    <scope>FUNCTION</scope>
</reference>
<reference key="10">
    <citation type="journal article" date="2002" name="Nature">
        <title>Identification of a host protein essential for assembly of immature HIV-1 capsids.</title>
        <authorList>
            <person name="Zimmerman C."/>
            <person name="Klein K.C."/>
            <person name="Kiser P.K."/>
            <person name="Singh A.R."/>
            <person name="Firestein B.L."/>
            <person name="Riba S.C."/>
            <person name="Lingappa J.R."/>
        </authorList>
    </citation>
    <scope>INTERACTION WITH HIV-1 VIF AND GAG PROTEINS (MICROBIAL INFECTION)</scope>
</reference>
<reference key="11">
    <citation type="journal article" date="2004" name="J. Virol.">
        <title>Conservation of a stepwise, energy-sensitive pathway involving HP68 for assembly of primate lentivirus capsids in cells.</title>
        <authorList>
            <person name="Dooher J.E."/>
            <person name="Lingappa J.R."/>
        </authorList>
    </citation>
    <scope>INTERACTION WITH HIV-2 PROTEIN GAG (MICROBIAL INFECTION)</scope>
</reference>
<reference key="12">
    <citation type="journal article" date="2011" name="BMC Syst. Biol.">
        <title>Initial characterization of the human central proteome.</title>
        <authorList>
            <person name="Burkard T.R."/>
            <person name="Planyavsky M."/>
            <person name="Kaupe I."/>
            <person name="Breitwieser F.P."/>
            <person name="Buerckstuemmer T."/>
            <person name="Bennett K.L."/>
            <person name="Superti-Furga G."/>
            <person name="Colinge J."/>
        </authorList>
    </citation>
    <scope>IDENTIFICATION BY MASS SPECTROMETRY [LARGE SCALE ANALYSIS]</scope>
</reference>
<reference key="13">
    <citation type="journal article" date="2010" name="Mol. Cell">
        <title>The role of ABCE1 in eukaryotic posttermination ribosomal recycling.</title>
        <authorList>
            <person name="Pisarev A.V."/>
            <person name="Skabkin M.A."/>
            <person name="Pisareva V.P."/>
            <person name="Skabkina O.V."/>
            <person name="Rakotondrafara A.M."/>
            <person name="Hentze M.W."/>
            <person name="Hellen C.U."/>
            <person name="Pestova T.V."/>
        </authorList>
    </citation>
    <scope>FUNCTION</scope>
    <scope>CATALYTIC ACTIVITY</scope>
</reference>
<reference key="14">
    <citation type="journal article" date="2011" name="EMBO J.">
        <title>Dissociation by Pelota, Hbs1 and ABCE1 of mammalian vacant 80S ribosomes and stalled elongation complexes.</title>
        <authorList>
            <person name="Pisareva V.P."/>
            <person name="Skabkin M.A."/>
            <person name="Hellen C.U."/>
            <person name="Pestova T.V."/>
            <person name="Pisarev A.V."/>
        </authorList>
    </citation>
    <scope>FUNCTION</scope>
</reference>
<reference key="15">
    <citation type="journal article" date="2013" name="J. Proteome Res.">
        <title>Toward a comprehensive characterization of a human cancer cell phosphoproteome.</title>
        <authorList>
            <person name="Zhou H."/>
            <person name="Di Palma S."/>
            <person name="Preisinger C."/>
            <person name="Peng M."/>
            <person name="Polat A.N."/>
            <person name="Heck A.J."/>
            <person name="Mohammed S."/>
        </authorList>
    </citation>
    <scope>PHOSPHORYLATION [LARGE SCALE ANALYSIS] AT SER-417 AND THR-550</scope>
    <scope>IDENTIFICATION BY MASS SPECTROMETRY [LARGE SCALE ANALYSIS]</scope>
    <source>
        <tissue>Cervix carcinoma</tissue>
        <tissue>Erythroleukemia</tissue>
    </source>
</reference>
<reference key="16">
    <citation type="journal article" date="2015" name="Acta Trop.">
        <title>Host interactions of Chandipura virus matrix protein.</title>
        <authorList>
            <person name="Rajasekharan S."/>
            <person name="Kumar K."/>
            <person name="Rana J."/>
            <person name="Gupta A."/>
            <person name="Chaudhary V.K."/>
            <person name="Gupta S."/>
        </authorList>
    </citation>
    <scope>INTERACTION WITH CHANDIPURA VIRUS MATRIX PROTEIN (MICROBIAL INFECTION)</scope>
</reference>
<reference key="17">
    <citation type="journal article" date="2015" name="Proteomics">
        <title>N-terminome analysis of the human mitochondrial proteome.</title>
        <authorList>
            <person name="Vaca Jacome A.S."/>
            <person name="Rabilloud T."/>
            <person name="Schaeffer-Reiss C."/>
            <person name="Rompais M."/>
            <person name="Ayoub D."/>
            <person name="Lane L."/>
            <person name="Bairoch A."/>
            <person name="Van Dorsselaer A."/>
            <person name="Carapito C."/>
        </authorList>
    </citation>
    <scope>IDENTIFICATION BY MASS SPECTROMETRY [LARGE SCALE ANALYSIS]</scope>
</reference>
<reference key="18">
    <citation type="journal article" date="2018" name="Cell Metab.">
        <title>Ubiquitination of ABCE1 by NOT4 in Response to Mitochondrial Damage Links Co-translational Quality Control to PINK1-Directed Mitophagy.</title>
        <authorList>
            <person name="Wu Z."/>
            <person name="Wang Y."/>
            <person name="Lim J."/>
            <person name="Liu B."/>
            <person name="Li Y."/>
            <person name="Vartak R."/>
            <person name="Stankiewicz T."/>
            <person name="Montgomery S."/>
            <person name="Lu B."/>
        </authorList>
    </citation>
    <scope>FUNCTION</scope>
    <scope>INTERACTION WITH PINK1; CNOT4 AND PELO</scope>
    <scope>UBIQUITINATION AT LYS-20</scope>
    <scope>MUTAGENESIS OF LYS-20</scope>
</reference>
<reference key="19">
    <citation type="journal article" date="2007" name="J. Proteome Res.">
        <title>Detection and validation of non-synonymous coding SNPs from orthogonal analysis of shotgun proteomics data.</title>
        <authorList>
            <person name="Bunger M.K."/>
            <person name="Cargile B.J."/>
            <person name="Sevinsky J.R."/>
            <person name="Deyanova E."/>
            <person name="Yates N.A."/>
            <person name="Hendrickson R.C."/>
            <person name="Stephenson J.L. Jr."/>
        </authorList>
    </citation>
    <scope>VARIANT CYS-489</scope>
    <scope>IDENTIFICATION BY MASS SPECTROMETRY</scope>
</reference>
<comment type="function">
    <text evidence="3 7 8 10 11 12">Nucleoside-triphosphatase (NTPase) involved in ribosome recycling by mediating ribosome disassembly (PubMed:20122402, PubMed:21448132). Able to hydrolyze ATP, GTP, UTP and CTP (PubMed:20122402). Splits ribosomes into free 60S subunits and tRNA- and mRNA-bound 40S subunits (PubMed:20122402, PubMed:21448132). Acts either after canonical termination facilitated by release factors (ETF1/eRF1) or after recognition of stalled and vacant ribosomes by mRNA surveillance factors (PELO/Pelota) (PubMed:20122402, PubMed:21448132). Involved in the No-Go Decay (NGD) pathway: recruited to stalled ribosomes by the Pelota-HBS1L complex, and drives the disassembly of stalled ribosomes, followed by degradation of damaged mRNAs as part of the NGD pathway (PubMed:21448132). Also plays a role in quality control of translation of mitochondrial outer membrane-localized mRNA (PubMed:29861391). As part of the PINK1-regulated signaling, ubiquitinated by CNOT4 upon mitochondria damage; this modification generates polyubiquitin signals that recruit autophagy receptors to the mitochondrial outer membrane and initiate mitophagy (PubMed:29861391). RNASEL-specific protein inhibitor which antagonizes the binding of 2-5A (5'-phosphorylated 2',5'-linked oligoadenylates) to RNASEL (PubMed:9660177). Negative regulator of the anti-viral effect of the interferon-regulated 2-5A/RNASEL pathway (PubMed:11585831, PubMed:9660177, PubMed:9847332).</text>
</comment>
<comment type="function">
    <text evidence="12">(Microbial infection) May act as a chaperone for post-translational events during HIV-1 capsid assembly.</text>
</comment>
<comment type="function">
    <text evidence="11">(Microbial infection) Plays a role in the down-regulation of the 2-5A/RNASEL pathway during encephalomyocarditis virus (EMCV) and HIV-1 infections.</text>
</comment>
<comment type="catalytic activity">
    <reaction evidence="7">
        <text>GTP + H2O = GDP + phosphate + H(+)</text>
        <dbReference type="Rhea" id="RHEA:19669"/>
        <dbReference type="ChEBI" id="CHEBI:15377"/>
        <dbReference type="ChEBI" id="CHEBI:15378"/>
        <dbReference type="ChEBI" id="CHEBI:37565"/>
        <dbReference type="ChEBI" id="CHEBI:43474"/>
        <dbReference type="ChEBI" id="CHEBI:58189"/>
    </reaction>
</comment>
<comment type="catalytic activity">
    <reaction evidence="7">
        <text>ATP + H2O = ADP + phosphate + H(+)</text>
        <dbReference type="Rhea" id="RHEA:13065"/>
        <dbReference type="ChEBI" id="CHEBI:15377"/>
        <dbReference type="ChEBI" id="CHEBI:15378"/>
        <dbReference type="ChEBI" id="CHEBI:30616"/>
        <dbReference type="ChEBI" id="CHEBI:43474"/>
        <dbReference type="ChEBI" id="CHEBI:456216"/>
    </reaction>
</comment>
<comment type="catalytic activity">
    <reaction evidence="7">
        <text>CTP + H2O = CDP + phosphate + H(+)</text>
        <dbReference type="Rhea" id="RHEA:29387"/>
        <dbReference type="ChEBI" id="CHEBI:15377"/>
        <dbReference type="ChEBI" id="CHEBI:15378"/>
        <dbReference type="ChEBI" id="CHEBI:37563"/>
        <dbReference type="ChEBI" id="CHEBI:43474"/>
        <dbReference type="ChEBI" id="CHEBI:58069"/>
    </reaction>
</comment>
<comment type="catalytic activity">
    <reaction evidence="7">
        <text>UTP + H2O = UDP + phosphate + H(+)</text>
        <dbReference type="Rhea" id="RHEA:64900"/>
        <dbReference type="ChEBI" id="CHEBI:15377"/>
        <dbReference type="ChEBI" id="CHEBI:15378"/>
        <dbReference type="ChEBI" id="CHEBI:43474"/>
        <dbReference type="ChEBI" id="CHEBI:46398"/>
        <dbReference type="ChEBI" id="CHEBI:58223"/>
    </reaction>
</comment>
<comment type="subunit">
    <text evidence="9">(Microbial infection) Interacts with Chandipura virus matrix protein.</text>
</comment>
<comment type="subunit">
    <text evidence="10 14">Interacts with PINK1 (PubMed:29861391). Interacts with CNOT4 (PubMed:29861391). Interacts with PELO (PubMed:29861391). Probably heterodimerizes with RNASEL; this interaction inhibits RNASEL (Probable) (PubMed:9660177).</text>
</comment>
<comment type="subunit">
    <text evidence="4">(Microbial infection) Interacts with HIV-1 proteins Vif and Gag.</text>
</comment>
<comment type="subunit">
    <text evidence="5">(Microbial infection) Interacts with HIV-2 protein Gag.</text>
</comment>
<comment type="interaction">
    <interactant intactId="EBI-2510446">
        <id>P61221</id>
    </interactant>
    <interactant intactId="EBI-366647">
        <id>O75822</id>
        <label>EIF3J</label>
    </interactant>
    <organismsDiffer>false</organismsDiffer>
    <experiments>4</experiments>
</comment>
<comment type="interaction">
    <interactant intactId="EBI-2510446">
        <id>P61221</id>
    </interactant>
    <interactant intactId="EBI-10687478">
        <id>P03347-1</id>
        <label>gag</label>
    </interactant>
    <organismsDiffer>true</organismsDiffer>
    <experiments>3</experiments>
</comment>
<comment type="interaction">
    <interactant intactId="EBI-2510446">
        <id>P61221</id>
    </interactant>
    <interactant intactId="EBI-10823897">
        <id>Q9WH76</id>
        <label>M</label>
    </interactant>
    <organismsDiffer>true</organismsDiffer>
    <experiments>3</experiments>
</comment>
<comment type="interaction">
    <interactant intactId="EBI-2510446">
        <id>P61221</id>
    </interactant>
    <interactant intactId="EBI-25568013">
        <id>P69479</id>
        <label>P</label>
    </interactant>
    <organismsDiffer>true</organismsDiffer>
    <experiments>3</experiments>
</comment>
<comment type="subcellular location">
    <subcellularLocation>
        <location evidence="3">Cytoplasm</location>
    </subcellularLocation>
    <subcellularLocation>
        <location evidence="3">Mitochondrion</location>
    </subcellularLocation>
</comment>
<comment type="induction">
    <text evidence="11 12">Activated by encephalomyocarditis virus (EMCV) and HIV-1.</text>
</comment>
<comment type="PTM">
    <text evidence="10">Ubiquitinated by CNOT4 (PubMed:29861391). Ubiquitination mediates the recruitment of autophagy receptors to the mitochondrial outer membrane and initiates mitophagy (PubMed:29861391).</text>
</comment>
<comment type="miscellaneous">
    <text>The ABC transporter domains seem not to be functional.</text>
</comment>
<comment type="similarity">
    <text evidence="13">Belongs to the ABC transporter superfamily. ABCE family.</text>
</comment>
<comment type="online information" name="ABCMdb">
    <link uri="http://abcm2.hegelab.org/search"/>
    <text>Database for mutations in ABC proteins</text>
</comment>
<gene>
    <name type="primary">ABCE1</name>
    <name type="synonym">RLI</name>
    <name type="synonym">RNASEL1</name>
    <name type="synonym">RNASELI</name>
    <name type="synonym">RNS4I</name>
    <name type="ORF">OK/SW-cl.40</name>
</gene>
<sequence>MADKLTRIAIVNHDKCKPKKCRQECKKSCPVVRMGKLCIEVTPQSKIAWISETLCIGCGICIKKCPFGALSIVNLPSNLEKETTHRYCANAFKLHRLPIPRPGEVLGLVGTNGIGKSTALKILAGKQKPNLGKYDDPPDWQEILTYFRGSELQNYFTKILEDDLKAIIKPQYVDQIPKAAKGTVGSILDRKDETKTQAIVCQQLDLTHLKERNVEDLSGGELQRFACAVVCIQKADIFMFDEPSSYLDVKQRLKAAITIRSLINPDRYIIVVEHDLSVLDYLSDFICCLYGVPSAYGVVTMPFSVREGINIFLDGYVPTENLRFRDASLVFKVAETANEEEVKKMCMYKYPGMKKKMGEFELAIVAGEFTDSEIMVMLGENGTGKTTFIRMLAGRLKPDEGGEVPVLNVSYKPQKISPKSTGSVRQLLHEKIRDAYTHPQFVTDVMKPLQIENIIDQEVQTLSGGELQRVALALCLGKPADVYLIDEPSAYLDSEQRLMAARVVKRFILHAKKTAFVVEHDFIMATYLADRVIVFDGVPSKNTVANSPQTLLAGMNKFLSQLEITFRRDPNNYRPRINKLNSIKDVEQKKSGNYFFLDD</sequence>
<keyword id="KW-0002">3D-structure</keyword>
<keyword id="KW-0004">4Fe-4S</keyword>
<keyword id="KW-0067">ATP-binding</keyword>
<keyword id="KW-0143">Chaperone</keyword>
<keyword id="KW-0963">Cytoplasm</keyword>
<keyword id="KW-0945">Host-virus interaction</keyword>
<keyword id="KW-0378">Hydrolase</keyword>
<keyword id="KW-0408">Iron</keyword>
<keyword id="KW-0411">Iron-sulfur</keyword>
<keyword id="KW-1017">Isopeptide bond</keyword>
<keyword id="KW-0479">Metal-binding</keyword>
<keyword id="KW-0496">Mitochondrion</keyword>
<keyword id="KW-0547">Nucleotide-binding</keyword>
<keyword id="KW-0597">Phosphoprotein</keyword>
<keyword id="KW-1267">Proteomics identification</keyword>
<keyword id="KW-1185">Reference proteome</keyword>
<keyword id="KW-0677">Repeat</keyword>
<keyword id="KW-0810">Translation regulation</keyword>
<keyword id="KW-0832">Ubl conjugation</keyword>
<protein>
    <recommendedName>
        <fullName>ATP-binding cassette sub-family E member 1</fullName>
        <ecNumber evidence="7">3.6.5.-</ecNumber>
    </recommendedName>
    <alternativeName>
        <fullName>2'-5'-oligoadenylate-binding protein</fullName>
    </alternativeName>
    <alternativeName>
        <fullName>HuHP68</fullName>
    </alternativeName>
    <alternativeName>
        <fullName>RNase L inhibitor</fullName>
    </alternativeName>
    <alternativeName>
        <fullName>Ribonuclease 4 inhibitor</fullName>
        <shortName>RNS4I</shortName>
    </alternativeName>
</protein>
<organism>
    <name type="scientific">Homo sapiens</name>
    <name type="common">Human</name>
    <dbReference type="NCBI Taxonomy" id="9606"/>
    <lineage>
        <taxon>Eukaryota</taxon>
        <taxon>Metazoa</taxon>
        <taxon>Chordata</taxon>
        <taxon>Craniata</taxon>
        <taxon>Vertebrata</taxon>
        <taxon>Euteleostomi</taxon>
        <taxon>Mammalia</taxon>
        <taxon>Eutheria</taxon>
        <taxon>Euarchontoglires</taxon>
        <taxon>Primates</taxon>
        <taxon>Haplorrhini</taxon>
        <taxon>Catarrhini</taxon>
        <taxon>Hominidae</taxon>
        <taxon>Homo</taxon>
    </lineage>
</organism>
<feature type="chain" id="PRO_0000093316" description="ATP-binding cassette sub-family E member 1">
    <location>
        <begin position="1"/>
        <end position="599"/>
    </location>
</feature>
<feature type="domain" description="4Fe-4S ferredoxin-type 1" evidence="2">
    <location>
        <begin position="7"/>
        <end position="37"/>
    </location>
</feature>
<feature type="domain" description="4Fe-4S ferredoxin-type 2" evidence="2">
    <location>
        <begin position="46"/>
        <end position="75"/>
    </location>
</feature>
<feature type="domain" description="ABC transporter 1" evidence="1">
    <location>
        <begin position="79"/>
        <end position="315"/>
    </location>
</feature>
<feature type="domain" description="ABC transporter 2" evidence="1">
    <location>
        <begin position="342"/>
        <end position="562"/>
    </location>
</feature>
<feature type="binding site" evidence="1">
    <location>
        <begin position="110"/>
        <end position="117"/>
    </location>
    <ligand>
        <name>ATP</name>
        <dbReference type="ChEBI" id="CHEBI:30616"/>
        <label>1</label>
    </ligand>
</feature>
<feature type="binding site" evidence="1">
    <location>
        <begin position="379"/>
        <end position="386"/>
    </location>
    <ligand>
        <name>ATP</name>
        <dbReference type="ChEBI" id="CHEBI:30616"/>
        <label>2</label>
    </ligand>
</feature>
<feature type="modified residue" description="Phosphoserine" evidence="15">
    <location>
        <position position="417"/>
    </location>
</feature>
<feature type="modified residue" description="Phosphothreonine" evidence="15">
    <location>
        <position position="550"/>
    </location>
</feature>
<feature type="cross-link" description="Glycyl lysine isopeptide (Lys-Gly) (interchain with G-Cter in ubiquitin)" evidence="10">
    <location>
        <position position="20"/>
    </location>
</feature>
<feature type="sequence variant" id="VAR_068914" description="Confirmed at protein level; dbSNP:rs3816497." evidence="6">
    <original>S</original>
    <variation>C</variation>
    <location>
        <position position="489"/>
    </location>
</feature>
<feature type="mutagenesis site" description="Abolishes ubiquitination by CNOT4 and diminished the ability to recruit autophagy receptors to damaged mitochondria and to nuclear encoded respiratory chain component mRNA-ribonucleoproteins complexes." evidence="10">
    <original>K</original>
    <variation>R</variation>
    <location>
        <position position="20"/>
    </location>
</feature>
<feature type="sequence conflict" description="In Ref. 1; CAA53972." evidence="13" ref="1">
    <original>T</original>
    <variation>A</variation>
    <location>
        <position position="118"/>
    </location>
</feature>
<feature type="sequence conflict" description="In Ref. 1; CAA53972." evidence="13" ref="1">
    <original>DQIPKA</original>
    <variation>ARFLRL</variation>
    <location>
        <begin position="174"/>
        <end position="179"/>
    </location>
</feature>
<feature type="sequence conflict" description="In Ref. 1; CAA53972/CAA52920." evidence="13" ref="1">
    <original>ALA</original>
    <variation>RLR</variation>
    <location>
        <begin position="471"/>
        <end position="473"/>
    </location>
</feature>
<accession>P61221</accession>
<accession>O88793</accession>
<accession>Q13181</accession>
<accession>Q13864</accession>
<accession>Q6NR76</accession>
<accession>Q96AL0</accession>
<accession>Q96B10</accession>
<accession>Q99K66</accession>